<accession>Q21KA1</accession>
<protein>
    <recommendedName>
        <fullName evidence="1">tRNA/tmRNA (uracil-C(5))-methyltransferase</fullName>
        <ecNumber evidence="1">2.1.1.-</ecNumber>
        <ecNumber evidence="1">2.1.1.35</ecNumber>
    </recommendedName>
    <alternativeName>
        <fullName evidence="1">tRNA (uracil(54)-C(5))-methyltransferase</fullName>
    </alternativeName>
    <alternativeName>
        <fullName evidence="1">tRNA(m5U54)-methyltransferase</fullName>
        <shortName evidence="1">RUMT</shortName>
    </alternativeName>
    <alternativeName>
        <fullName evidence="1">tmRNA (uracil(341)-C(5))-methyltransferase</fullName>
    </alternativeName>
</protein>
<gene>
    <name evidence="1" type="primary">trmA</name>
    <name type="ordered locus">Sde_1616</name>
</gene>
<proteinExistence type="inferred from homology"/>
<sequence>MTTKLGQANPANYQQQLDDKEKATKEQFSDFWQGDIEVHPSPPSHYRMRAEFKMWQQGAEAFYAMYQPGEYKKPVTLEWEFSVGAEKIVELMPKLLEIVNASELLRKRLFQVEFLTTTTGESVTTLIYHKPLTEEWQAEANALASSLNTHIIGRSKKQKIVLTQDYVEETLTISGTPFTYKQIESGFTQPNAAVCQKMLQWAVDATANLGGDLVELYCGNGNFTLPLSKNFDKVLATEVSKTSVKAAEYNIEKNGCKNITIARMSSEEFTEALNGVREFRRLKDIELDSYNFSTVFVDPPRAGLDEDTEALISRFDNIIYISCNPDTLANNLANLCKTHKVERFALFDQFPYTDHRECGVILTKK</sequence>
<keyword id="KW-0489">Methyltransferase</keyword>
<keyword id="KW-1185">Reference proteome</keyword>
<keyword id="KW-0949">S-adenosyl-L-methionine</keyword>
<keyword id="KW-0808">Transferase</keyword>
<keyword id="KW-0819">tRNA processing</keyword>
<evidence type="ECO:0000255" key="1">
    <source>
        <dbReference type="HAMAP-Rule" id="MF_01011"/>
    </source>
</evidence>
<organism>
    <name type="scientific">Saccharophagus degradans (strain 2-40 / ATCC 43961 / DSM 17024)</name>
    <dbReference type="NCBI Taxonomy" id="203122"/>
    <lineage>
        <taxon>Bacteria</taxon>
        <taxon>Pseudomonadati</taxon>
        <taxon>Pseudomonadota</taxon>
        <taxon>Gammaproteobacteria</taxon>
        <taxon>Cellvibrionales</taxon>
        <taxon>Cellvibrionaceae</taxon>
        <taxon>Saccharophagus</taxon>
    </lineage>
</organism>
<feature type="chain" id="PRO_0000281456" description="tRNA/tmRNA (uracil-C(5))-methyltransferase">
    <location>
        <begin position="1"/>
        <end position="365"/>
    </location>
</feature>
<feature type="active site" description="Nucleophile" evidence="1">
    <location>
        <position position="323"/>
    </location>
</feature>
<feature type="active site" description="Proton acceptor" evidence="1">
    <location>
        <position position="357"/>
    </location>
</feature>
<feature type="binding site" evidence="1">
    <location>
        <position position="189"/>
    </location>
    <ligand>
        <name>S-adenosyl-L-methionine</name>
        <dbReference type="ChEBI" id="CHEBI:59789"/>
    </ligand>
</feature>
<feature type="binding site" evidence="1">
    <location>
        <position position="217"/>
    </location>
    <ligand>
        <name>S-adenosyl-L-methionine</name>
        <dbReference type="ChEBI" id="CHEBI:59789"/>
    </ligand>
</feature>
<feature type="binding site" evidence="1">
    <location>
        <position position="222"/>
    </location>
    <ligand>
        <name>S-adenosyl-L-methionine</name>
        <dbReference type="ChEBI" id="CHEBI:59789"/>
    </ligand>
</feature>
<feature type="binding site" evidence="1">
    <location>
        <position position="238"/>
    </location>
    <ligand>
        <name>S-adenosyl-L-methionine</name>
        <dbReference type="ChEBI" id="CHEBI:59789"/>
    </ligand>
</feature>
<feature type="binding site" evidence="1">
    <location>
        <position position="298"/>
    </location>
    <ligand>
        <name>S-adenosyl-L-methionine</name>
        <dbReference type="ChEBI" id="CHEBI:59789"/>
    </ligand>
</feature>
<comment type="function">
    <text evidence="1">Dual-specificity methyltransferase that catalyzes the formation of 5-methyluridine at position 54 (m5U54) in all tRNAs, and that of position 341 (m5U341) in tmRNA (transfer-mRNA).</text>
</comment>
<comment type="catalytic activity">
    <reaction evidence="1">
        <text>uridine(54) in tRNA + S-adenosyl-L-methionine = 5-methyluridine(54) in tRNA + S-adenosyl-L-homocysteine + H(+)</text>
        <dbReference type="Rhea" id="RHEA:42712"/>
        <dbReference type="Rhea" id="RHEA-COMP:10167"/>
        <dbReference type="Rhea" id="RHEA-COMP:10193"/>
        <dbReference type="ChEBI" id="CHEBI:15378"/>
        <dbReference type="ChEBI" id="CHEBI:57856"/>
        <dbReference type="ChEBI" id="CHEBI:59789"/>
        <dbReference type="ChEBI" id="CHEBI:65315"/>
        <dbReference type="ChEBI" id="CHEBI:74447"/>
        <dbReference type="EC" id="2.1.1.35"/>
    </reaction>
</comment>
<comment type="catalytic activity">
    <reaction evidence="1">
        <text>uridine(341) in tmRNA + S-adenosyl-L-methionine = 5-methyluridine(341) in tmRNA + S-adenosyl-L-homocysteine + H(+)</text>
        <dbReference type="Rhea" id="RHEA:43612"/>
        <dbReference type="Rhea" id="RHEA-COMP:10630"/>
        <dbReference type="Rhea" id="RHEA-COMP:10631"/>
        <dbReference type="ChEBI" id="CHEBI:15378"/>
        <dbReference type="ChEBI" id="CHEBI:57856"/>
        <dbReference type="ChEBI" id="CHEBI:59789"/>
        <dbReference type="ChEBI" id="CHEBI:65315"/>
        <dbReference type="ChEBI" id="CHEBI:74447"/>
    </reaction>
</comment>
<comment type="similarity">
    <text evidence="1">Belongs to the class I-like SAM-binding methyltransferase superfamily. RNA M5U methyltransferase family. TrmA subfamily.</text>
</comment>
<name>TRMA_SACD2</name>
<dbReference type="EC" id="2.1.1.-" evidence="1"/>
<dbReference type="EC" id="2.1.1.35" evidence="1"/>
<dbReference type="EMBL" id="CP000282">
    <property type="protein sequence ID" value="ABD80878.1"/>
    <property type="molecule type" value="Genomic_DNA"/>
</dbReference>
<dbReference type="RefSeq" id="WP_011468098.1">
    <property type="nucleotide sequence ID" value="NC_007912.1"/>
</dbReference>
<dbReference type="SMR" id="Q21KA1"/>
<dbReference type="STRING" id="203122.Sde_1616"/>
<dbReference type="GeneID" id="98613294"/>
<dbReference type="KEGG" id="sde:Sde_1616"/>
<dbReference type="eggNOG" id="COG2265">
    <property type="taxonomic scope" value="Bacteria"/>
</dbReference>
<dbReference type="HOGENOM" id="CLU_043022_0_0_6"/>
<dbReference type="OrthoDB" id="9804590at2"/>
<dbReference type="Proteomes" id="UP000001947">
    <property type="component" value="Chromosome"/>
</dbReference>
<dbReference type="GO" id="GO:0005829">
    <property type="term" value="C:cytosol"/>
    <property type="evidence" value="ECO:0007669"/>
    <property type="project" value="TreeGrafter"/>
</dbReference>
<dbReference type="GO" id="GO:0019843">
    <property type="term" value="F:rRNA binding"/>
    <property type="evidence" value="ECO:0007669"/>
    <property type="project" value="TreeGrafter"/>
</dbReference>
<dbReference type="GO" id="GO:0030697">
    <property type="term" value="F:tRNA (uracil(54)-C5)-methyltransferase activity, S-adenosyl methionine-dependent"/>
    <property type="evidence" value="ECO:0007669"/>
    <property type="project" value="UniProtKB-UniRule"/>
</dbReference>
<dbReference type="GO" id="GO:0000049">
    <property type="term" value="F:tRNA binding"/>
    <property type="evidence" value="ECO:0007669"/>
    <property type="project" value="TreeGrafter"/>
</dbReference>
<dbReference type="GO" id="GO:0030488">
    <property type="term" value="P:tRNA methylation"/>
    <property type="evidence" value="ECO:0007669"/>
    <property type="project" value="UniProtKB-UniRule"/>
</dbReference>
<dbReference type="CDD" id="cd02440">
    <property type="entry name" value="AdoMet_MTases"/>
    <property type="match status" value="1"/>
</dbReference>
<dbReference type="FunFam" id="2.40.50.1070:FF:000001">
    <property type="entry name" value="tRNA/tmRNA (uracil-C(5))-methyltransferase"/>
    <property type="match status" value="1"/>
</dbReference>
<dbReference type="FunFam" id="3.40.50.150:FF:000012">
    <property type="entry name" value="tRNA/tmRNA (uracil-C(5))-methyltransferase"/>
    <property type="match status" value="1"/>
</dbReference>
<dbReference type="Gene3D" id="2.40.50.1070">
    <property type="match status" value="1"/>
</dbReference>
<dbReference type="Gene3D" id="3.40.50.150">
    <property type="entry name" value="Vaccinia Virus protein VP39"/>
    <property type="match status" value="1"/>
</dbReference>
<dbReference type="HAMAP" id="MF_01011">
    <property type="entry name" value="RNA_methyltr_TrmA"/>
    <property type="match status" value="1"/>
</dbReference>
<dbReference type="InterPro" id="IPR030390">
    <property type="entry name" value="MeTrfase_TrmA_AS"/>
</dbReference>
<dbReference type="InterPro" id="IPR029063">
    <property type="entry name" value="SAM-dependent_MTases_sf"/>
</dbReference>
<dbReference type="InterPro" id="IPR011869">
    <property type="entry name" value="TrmA_MeTrfase"/>
</dbReference>
<dbReference type="InterPro" id="IPR010280">
    <property type="entry name" value="U5_MeTrfase_fam"/>
</dbReference>
<dbReference type="NCBIfam" id="TIGR02143">
    <property type="entry name" value="trmA_only"/>
    <property type="match status" value="1"/>
</dbReference>
<dbReference type="PANTHER" id="PTHR47790">
    <property type="entry name" value="TRNA/TMRNA (URACIL-C(5))-METHYLTRANSFERASE"/>
    <property type="match status" value="1"/>
</dbReference>
<dbReference type="PANTHER" id="PTHR47790:SF2">
    <property type="entry name" value="TRNA_TMRNA (URACIL-C(5))-METHYLTRANSFERASE"/>
    <property type="match status" value="1"/>
</dbReference>
<dbReference type="Pfam" id="PF05958">
    <property type="entry name" value="tRNA_U5-meth_tr"/>
    <property type="match status" value="1"/>
</dbReference>
<dbReference type="SUPFAM" id="SSF53335">
    <property type="entry name" value="S-adenosyl-L-methionine-dependent methyltransferases"/>
    <property type="match status" value="1"/>
</dbReference>
<dbReference type="PROSITE" id="PS51687">
    <property type="entry name" value="SAM_MT_RNA_M5U"/>
    <property type="match status" value="1"/>
</dbReference>
<dbReference type="PROSITE" id="PS01230">
    <property type="entry name" value="TRMA_1"/>
    <property type="match status" value="1"/>
</dbReference>
<reference key="1">
    <citation type="journal article" date="2008" name="PLoS Genet.">
        <title>Complete genome sequence of the complex carbohydrate-degrading marine bacterium, Saccharophagus degradans strain 2-40 T.</title>
        <authorList>
            <person name="Weiner R.M."/>
            <person name="Taylor L.E. II"/>
            <person name="Henrissat B."/>
            <person name="Hauser L."/>
            <person name="Land M."/>
            <person name="Coutinho P.M."/>
            <person name="Rancurel C."/>
            <person name="Saunders E.H."/>
            <person name="Longmire A.G."/>
            <person name="Zhang H."/>
            <person name="Bayer E.A."/>
            <person name="Gilbert H.J."/>
            <person name="Larimer F."/>
            <person name="Zhulin I.B."/>
            <person name="Ekborg N.A."/>
            <person name="Lamed R."/>
            <person name="Richardson P.M."/>
            <person name="Borovok I."/>
            <person name="Hutcheson S."/>
        </authorList>
    </citation>
    <scope>NUCLEOTIDE SEQUENCE [LARGE SCALE GENOMIC DNA]</scope>
    <source>
        <strain>2-40 / ATCC 43961 / DSM 17024</strain>
    </source>
</reference>